<organism>
    <name type="scientific">Ralstonia pickettii (strain 12J)</name>
    <dbReference type="NCBI Taxonomy" id="402626"/>
    <lineage>
        <taxon>Bacteria</taxon>
        <taxon>Pseudomonadati</taxon>
        <taxon>Pseudomonadota</taxon>
        <taxon>Betaproteobacteria</taxon>
        <taxon>Burkholderiales</taxon>
        <taxon>Burkholderiaceae</taxon>
        <taxon>Ralstonia</taxon>
    </lineage>
</organism>
<gene>
    <name evidence="1" type="primary">lpxD</name>
    <name type="ordered locus">Rpic_1288</name>
</gene>
<feature type="chain" id="PRO_1000127694" description="UDP-3-O-acylglucosamine N-acyltransferase">
    <location>
        <begin position="1"/>
        <end position="357"/>
    </location>
</feature>
<feature type="active site" description="Proton acceptor" evidence="1">
    <location>
        <position position="251"/>
    </location>
</feature>
<evidence type="ECO:0000255" key="1">
    <source>
        <dbReference type="HAMAP-Rule" id="MF_00523"/>
    </source>
</evidence>
<sequence length="357" mass="37031">MSFSLGELAASLGATVQGDAGLIVKSIAPLDQAGADQLAFLSNPLYLNQAVSSGAGAIIVSPRDLETLESQGHAAGRNWLIAANPYAAFARVAQRFVALAARPVVPGIHRTASVEEGARVPASCSIGPNVTIEAGAVLGERVRIAGNSFVGADARIGDDTLLYANVSIYHGCVVGARCVLHSGVVIGADGFGFAPDFGPQGGEWVKIPQVGRAVIGDDVEIGANTAIDRGAMADTVVEQGCKIDNQVQIAHNVHVGAYTVIAGCAAISGSTKIGRYCIIGGAANFAGHLTIADRVTVSGGTSITKSITKPGGHFTSVFPFMPHGDWERNAAIVRGLTRMRERLQQLEQRVKDLQQQS</sequence>
<protein>
    <recommendedName>
        <fullName evidence="1">UDP-3-O-acylglucosamine N-acyltransferase</fullName>
        <ecNumber evidence="1">2.3.1.191</ecNumber>
    </recommendedName>
</protein>
<dbReference type="EC" id="2.3.1.191" evidence="1"/>
<dbReference type="EMBL" id="CP001068">
    <property type="protein sequence ID" value="ACD26432.1"/>
    <property type="molecule type" value="Genomic_DNA"/>
</dbReference>
<dbReference type="SMR" id="B2UBB1"/>
<dbReference type="STRING" id="402626.Rpic_1288"/>
<dbReference type="KEGG" id="rpi:Rpic_1288"/>
<dbReference type="eggNOG" id="COG1044">
    <property type="taxonomic scope" value="Bacteria"/>
</dbReference>
<dbReference type="HOGENOM" id="CLU_049865_0_1_4"/>
<dbReference type="UniPathway" id="UPA00973"/>
<dbReference type="GO" id="GO:0016020">
    <property type="term" value="C:membrane"/>
    <property type="evidence" value="ECO:0007669"/>
    <property type="project" value="GOC"/>
</dbReference>
<dbReference type="GO" id="GO:0016410">
    <property type="term" value="F:N-acyltransferase activity"/>
    <property type="evidence" value="ECO:0007669"/>
    <property type="project" value="InterPro"/>
</dbReference>
<dbReference type="GO" id="GO:0009245">
    <property type="term" value="P:lipid A biosynthetic process"/>
    <property type="evidence" value="ECO:0007669"/>
    <property type="project" value="UniProtKB-UniRule"/>
</dbReference>
<dbReference type="CDD" id="cd03352">
    <property type="entry name" value="LbH_LpxD"/>
    <property type="match status" value="1"/>
</dbReference>
<dbReference type="Gene3D" id="2.160.10.10">
    <property type="entry name" value="Hexapeptide repeat proteins"/>
    <property type="match status" value="1"/>
</dbReference>
<dbReference type="Gene3D" id="3.40.1390.10">
    <property type="entry name" value="MurE/MurF, N-terminal domain"/>
    <property type="match status" value="1"/>
</dbReference>
<dbReference type="HAMAP" id="MF_00523">
    <property type="entry name" value="LpxD"/>
    <property type="match status" value="1"/>
</dbReference>
<dbReference type="InterPro" id="IPR001451">
    <property type="entry name" value="Hexapep"/>
</dbReference>
<dbReference type="InterPro" id="IPR007691">
    <property type="entry name" value="LpxD"/>
</dbReference>
<dbReference type="InterPro" id="IPR011004">
    <property type="entry name" value="Trimer_LpxA-like_sf"/>
</dbReference>
<dbReference type="InterPro" id="IPR020573">
    <property type="entry name" value="UDP_GlcNAc_AcTrfase_non-rep"/>
</dbReference>
<dbReference type="NCBIfam" id="TIGR01853">
    <property type="entry name" value="lipid_A_lpxD"/>
    <property type="match status" value="1"/>
</dbReference>
<dbReference type="NCBIfam" id="NF002060">
    <property type="entry name" value="PRK00892.1"/>
    <property type="match status" value="1"/>
</dbReference>
<dbReference type="PANTHER" id="PTHR43378">
    <property type="entry name" value="UDP-3-O-ACYLGLUCOSAMINE N-ACYLTRANSFERASE"/>
    <property type="match status" value="1"/>
</dbReference>
<dbReference type="PANTHER" id="PTHR43378:SF2">
    <property type="entry name" value="UDP-3-O-ACYLGLUCOSAMINE N-ACYLTRANSFERASE 1, MITOCHONDRIAL-RELATED"/>
    <property type="match status" value="1"/>
</dbReference>
<dbReference type="Pfam" id="PF00132">
    <property type="entry name" value="Hexapep"/>
    <property type="match status" value="2"/>
</dbReference>
<dbReference type="Pfam" id="PF04613">
    <property type="entry name" value="LpxD"/>
    <property type="match status" value="1"/>
</dbReference>
<dbReference type="SUPFAM" id="SSF51161">
    <property type="entry name" value="Trimeric LpxA-like enzymes"/>
    <property type="match status" value="1"/>
</dbReference>
<dbReference type="PROSITE" id="PS00101">
    <property type="entry name" value="HEXAPEP_TRANSFERASES"/>
    <property type="match status" value="1"/>
</dbReference>
<comment type="function">
    <text evidence="1">Catalyzes the N-acylation of UDP-3-O-acylglucosamine using 3-hydroxyacyl-ACP as the acyl donor. Is involved in the biosynthesis of lipid A, a phosphorylated glycolipid that anchors the lipopolysaccharide to the outer membrane of the cell.</text>
</comment>
<comment type="catalytic activity">
    <reaction evidence="1">
        <text>a UDP-3-O-[(3R)-3-hydroxyacyl]-alpha-D-glucosamine + a (3R)-hydroxyacyl-[ACP] = a UDP-2-N,3-O-bis[(3R)-3-hydroxyacyl]-alpha-D-glucosamine + holo-[ACP] + H(+)</text>
        <dbReference type="Rhea" id="RHEA:53836"/>
        <dbReference type="Rhea" id="RHEA-COMP:9685"/>
        <dbReference type="Rhea" id="RHEA-COMP:9945"/>
        <dbReference type="ChEBI" id="CHEBI:15378"/>
        <dbReference type="ChEBI" id="CHEBI:64479"/>
        <dbReference type="ChEBI" id="CHEBI:78827"/>
        <dbReference type="ChEBI" id="CHEBI:137740"/>
        <dbReference type="ChEBI" id="CHEBI:137748"/>
        <dbReference type="EC" id="2.3.1.191"/>
    </reaction>
</comment>
<comment type="pathway">
    <text evidence="1">Bacterial outer membrane biogenesis; LPS lipid A biosynthesis.</text>
</comment>
<comment type="subunit">
    <text evidence="1">Homotrimer.</text>
</comment>
<comment type="similarity">
    <text evidence="1">Belongs to the transferase hexapeptide repeat family. LpxD subfamily.</text>
</comment>
<name>LPXD_RALPJ</name>
<accession>B2UBB1</accession>
<proteinExistence type="inferred from homology"/>
<keyword id="KW-0012">Acyltransferase</keyword>
<keyword id="KW-0441">Lipid A biosynthesis</keyword>
<keyword id="KW-0444">Lipid biosynthesis</keyword>
<keyword id="KW-0443">Lipid metabolism</keyword>
<keyword id="KW-0677">Repeat</keyword>
<keyword id="KW-0808">Transferase</keyword>
<reference key="1">
    <citation type="submission" date="2008-05" db="EMBL/GenBank/DDBJ databases">
        <title>Complete sequence of chromosome 1 of Ralstonia pickettii 12J.</title>
        <authorList>
            <person name="Lucas S."/>
            <person name="Copeland A."/>
            <person name="Lapidus A."/>
            <person name="Glavina del Rio T."/>
            <person name="Dalin E."/>
            <person name="Tice H."/>
            <person name="Bruce D."/>
            <person name="Goodwin L."/>
            <person name="Pitluck S."/>
            <person name="Meincke L."/>
            <person name="Brettin T."/>
            <person name="Detter J.C."/>
            <person name="Han C."/>
            <person name="Kuske C.R."/>
            <person name="Schmutz J."/>
            <person name="Larimer F."/>
            <person name="Land M."/>
            <person name="Hauser L."/>
            <person name="Kyrpides N."/>
            <person name="Mikhailova N."/>
            <person name="Marsh T."/>
            <person name="Richardson P."/>
        </authorList>
    </citation>
    <scope>NUCLEOTIDE SEQUENCE [LARGE SCALE GENOMIC DNA]</scope>
    <source>
        <strain>12J</strain>
    </source>
</reference>